<keyword id="KW-0030">Aminoacyl-tRNA synthetase</keyword>
<keyword id="KW-0067">ATP-binding</keyword>
<keyword id="KW-0963">Cytoplasm</keyword>
<keyword id="KW-0436">Ligase</keyword>
<keyword id="KW-0460">Magnesium</keyword>
<keyword id="KW-0479">Metal-binding</keyword>
<keyword id="KW-0547">Nucleotide-binding</keyword>
<keyword id="KW-0648">Protein biosynthesis</keyword>
<keyword id="KW-1185">Reference proteome</keyword>
<name>SYFA_DEIRA</name>
<protein>
    <recommendedName>
        <fullName>Phenylalanine--tRNA ligase alpha subunit</fullName>
        <ecNumber>6.1.1.20</ecNumber>
    </recommendedName>
    <alternativeName>
        <fullName>Phenylalanyl-tRNA synthetase alpha subunit</fullName>
        <shortName>PheRS</shortName>
    </alternativeName>
</protein>
<organism>
    <name type="scientific">Deinococcus radiodurans (strain ATCC 13939 / DSM 20539 / JCM 16871 / CCUG 27074 / LMG 4051 / NBRC 15346 / NCIMB 9279 / VKM B-1422 / R1)</name>
    <dbReference type="NCBI Taxonomy" id="243230"/>
    <lineage>
        <taxon>Bacteria</taxon>
        <taxon>Thermotogati</taxon>
        <taxon>Deinococcota</taxon>
        <taxon>Deinococci</taxon>
        <taxon>Deinococcales</taxon>
        <taxon>Deinococcaceae</taxon>
        <taxon>Deinococcus</taxon>
    </lineage>
</organism>
<sequence length="339" mass="37549">MQDTAIQEIQGAETLEALQAVKTKYVGKSGLVTKELGSLGKLPPEERKACGAEINVVRAAIQAALDEKESALKRAALDAKLASEAIDVTLPGLPLPAGGLHPISRVLDDLIGIYRQMGYAVIEGPEVEEEHYNFEALNVPWYHPARDLQDTFWLEDGRLLRTHTSPMQIRYMVDHEPPFKIVVRGKVYRYEATDATHEAMFHQLEGLVVGDGISMSDLKGTIAEMARGLYGASAKARFQPSYYPFVEPGADFAVYWENPRGESKWLELGGCGMVHPNVFKAVDDLREAAGKDRVYEGKTGFAFGLGLERIAMLKYGIPDIRYFYANDPRVIGQFRGELG</sequence>
<evidence type="ECO:0000250" key="1"/>
<evidence type="ECO:0000305" key="2"/>
<dbReference type="EC" id="6.1.1.20"/>
<dbReference type="EMBL" id="AE000513">
    <property type="protein sequence ID" value="AAF11900.1"/>
    <property type="molecule type" value="Genomic_DNA"/>
</dbReference>
<dbReference type="PIR" id="H75283">
    <property type="entry name" value="H75283"/>
</dbReference>
<dbReference type="RefSeq" id="NP_296075.1">
    <property type="nucleotide sequence ID" value="NC_001263.1"/>
</dbReference>
<dbReference type="RefSeq" id="WP_010888980.1">
    <property type="nucleotide sequence ID" value="NC_001263.1"/>
</dbReference>
<dbReference type="SMR" id="Q9RRX8"/>
<dbReference type="FunCoup" id="Q9RRX8">
    <property type="interactions" value="447"/>
</dbReference>
<dbReference type="STRING" id="243230.DR_2354"/>
<dbReference type="PaxDb" id="243230-DR_2354"/>
<dbReference type="EnsemblBacteria" id="AAF11900">
    <property type="protein sequence ID" value="AAF11900"/>
    <property type="gene ID" value="DR_2354"/>
</dbReference>
<dbReference type="GeneID" id="69518604"/>
<dbReference type="KEGG" id="dra:DR_2354"/>
<dbReference type="PATRIC" id="fig|243230.17.peg.2588"/>
<dbReference type="eggNOG" id="COG0016">
    <property type="taxonomic scope" value="Bacteria"/>
</dbReference>
<dbReference type="HOGENOM" id="CLU_025086_0_1_0"/>
<dbReference type="InParanoid" id="Q9RRX8"/>
<dbReference type="OrthoDB" id="9800719at2"/>
<dbReference type="Proteomes" id="UP000002524">
    <property type="component" value="Chromosome 1"/>
</dbReference>
<dbReference type="GO" id="GO:0005737">
    <property type="term" value="C:cytoplasm"/>
    <property type="evidence" value="ECO:0000318"/>
    <property type="project" value="GO_Central"/>
</dbReference>
<dbReference type="GO" id="GO:0005524">
    <property type="term" value="F:ATP binding"/>
    <property type="evidence" value="ECO:0007669"/>
    <property type="project" value="UniProtKB-UniRule"/>
</dbReference>
<dbReference type="GO" id="GO:0000287">
    <property type="term" value="F:magnesium ion binding"/>
    <property type="evidence" value="ECO:0007669"/>
    <property type="project" value="UniProtKB-UniRule"/>
</dbReference>
<dbReference type="GO" id="GO:0004826">
    <property type="term" value="F:phenylalanine-tRNA ligase activity"/>
    <property type="evidence" value="ECO:0000318"/>
    <property type="project" value="GO_Central"/>
</dbReference>
<dbReference type="GO" id="GO:0000049">
    <property type="term" value="F:tRNA binding"/>
    <property type="evidence" value="ECO:0007669"/>
    <property type="project" value="InterPro"/>
</dbReference>
<dbReference type="GO" id="GO:0006432">
    <property type="term" value="P:phenylalanyl-tRNA aminoacylation"/>
    <property type="evidence" value="ECO:0000318"/>
    <property type="project" value="GO_Central"/>
</dbReference>
<dbReference type="CDD" id="cd00496">
    <property type="entry name" value="PheRS_alpha_core"/>
    <property type="match status" value="1"/>
</dbReference>
<dbReference type="Gene3D" id="3.30.930.10">
    <property type="entry name" value="Bira Bifunctional Protein, Domain 2"/>
    <property type="match status" value="1"/>
</dbReference>
<dbReference type="HAMAP" id="MF_00281">
    <property type="entry name" value="Phe_tRNA_synth_alpha1"/>
    <property type="match status" value="1"/>
</dbReference>
<dbReference type="InterPro" id="IPR006195">
    <property type="entry name" value="aa-tRNA-synth_II"/>
</dbReference>
<dbReference type="InterPro" id="IPR045864">
    <property type="entry name" value="aa-tRNA-synth_II/BPL/LPL"/>
</dbReference>
<dbReference type="InterPro" id="IPR004529">
    <property type="entry name" value="Phe-tRNA-synth_IIc_asu"/>
</dbReference>
<dbReference type="InterPro" id="IPR004188">
    <property type="entry name" value="Phe-tRNA_ligase_II_N"/>
</dbReference>
<dbReference type="InterPro" id="IPR022911">
    <property type="entry name" value="Phe_tRNA_ligase_alpha1_bac"/>
</dbReference>
<dbReference type="InterPro" id="IPR002319">
    <property type="entry name" value="Phenylalanyl-tRNA_Synthase"/>
</dbReference>
<dbReference type="InterPro" id="IPR010978">
    <property type="entry name" value="tRNA-bd_arm"/>
</dbReference>
<dbReference type="NCBIfam" id="TIGR00468">
    <property type="entry name" value="pheS"/>
    <property type="match status" value="1"/>
</dbReference>
<dbReference type="PANTHER" id="PTHR11538:SF41">
    <property type="entry name" value="PHENYLALANINE--TRNA LIGASE, MITOCHONDRIAL"/>
    <property type="match status" value="1"/>
</dbReference>
<dbReference type="PANTHER" id="PTHR11538">
    <property type="entry name" value="PHENYLALANYL-TRNA SYNTHETASE"/>
    <property type="match status" value="1"/>
</dbReference>
<dbReference type="Pfam" id="PF02912">
    <property type="entry name" value="Phe_tRNA-synt_N"/>
    <property type="match status" value="1"/>
</dbReference>
<dbReference type="Pfam" id="PF01409">
    <property type="entry name" value="tRNA-synt_2d"/>
    <property type="match status" value="1"/>
</dbReference>
<dbReference type="SUPFAM" id="SSF55681">
    <property type="entry name" value="Class II aaRS and biotin synthetases"/>
    <property type="match status" value="1"/>
</dbReference>
<dbReference type="SUPFAM" id="SSF46589">
    <property type="entry name" value="tRNA-binding arm"/>
    <property type="match status" value="1"/>
</dbReference>
<dbReference type="PROSITE" id="PS50862">
    <property type="entry name" value="AA_TRNA_LIGASE_II"/>
    <property type="match status" value="1"/>
</dbReference>
<comment type="catalytic activity">
    <reaction>
        <text>tRNA(Phe) + L-phenylalanine + ATP = L-phenylalanyl-tRNA(Phe) + AMP + diphosphate + H(+)</text>
        <dbReference type="Rhea" id="RHEA:19413"/>
        <dbReference type="Rhea" id="RHEA-COMP:9668"/>
        <dbReference type="Rhea" id="RHEA-COMP:9699"/>
        <dbReference type="ChEBI" id="CHEBI:15378"/>
        <dbReference type="ChEBI" id="CHEBI:30616"/>
        <dbReference type="ChEBI" id="CHEBI:33019"/>
        <dbReference type="ChEBI" id="CHEBI:58095"/>
        <dbReference type="ChEBI" id="CHEBI:78442"/>
        <dbReference type="ChEBI" id="CHEBI:78531"/>
        <dbReference type="ChEBI" id="CHEBI:456215"/>
        <dbReference type="EC" id="6.1.1.20"/>
    </reaction>
</comment>
<comment type="cofactor">
    <cofactor evidence="1">
        <name>Mg(2+)</name>
        <dbReference type="ChEBI" id="CHEBI:18420"/>
    </cofactor>
    <text evidence="1">Binds 2 magnesium ions per tetramer.</text>
</comment>
<comment type="subunit">
    <text evidence="1">Tetramer of two alpha and two beta subunits.</text>
</comment>
<comment type="subcellular location">
    <subcellularLocation>
        <location evidence="1">Cytoplasm</location>
    </subcellularLocation>
</comment>
<comment type="similarity">
    <text evidence="2">Belongs to the class-II aminoacyl-tRNA synthetase family. Phe-tRNA synthetase alpha subunit type 1 subfamily.</text>
</comment>
<reference key="1">
    <citation type="journal article" date="1999" name="Science">
        <title>Genome sequence of the radioresistant bacterium Deinococcus radiodurans R1.</title>
        <authorList>
            <person name="White O."/>
            <person name="Eisen J.A."/>
            <person name="Heidelberg J.F."/>
            <person name="Hickey E.K."/>
            <person name="Peterson J.D."/>
            <person name="Dodson R.J."/>
            <person name="Haft D.H."/>
            <person name="Gwinn M.L."/>
            <person name="Nelson W.C."/>
            <person name="Richardson D.L."/>
            <person name="Moffat K.S."/>
            <person name="Qin H."/>
            <person name="Jiang L."/>
            <person name="Pamphile W."/>
            <person name="Crosby M."/>
            <person name="Shen M."/>
            <person name="Vamathevan J.J."/>
            <person name="Lam P."/>
            <person name="McDonald L.A."/>
            <person name="Utterback T.R."/>
            <person name="Zalewski C."/>
            <person name="Makarova K.S."/>
            <person name="Aravind L."/>
            <person name="Daly M.J."/>
            <person name="Minton K.W."/>
            <person name="Fleischmann R.D."/>
            <person name="Ketchum K.A."/>
            <person name="Nelson K.E."/>
            <person name="Salzberg S.L."/>
            <person name="Smith H.O."/>
            <person name="Venter J.C."/>
            <person name="Fraser C.M."/>
        </authorList>
    </citation>
    <scope>NUCLEOTIDE SEQUENCE [LARGE SCALE GENOMIC DNA]</scope>
    <source>
        <strain>ATCC 13939 / DSM 20539 / JCM 16871 / CCUG 27074 / LMG 4051 / NBRC 15346 / NCIMB 9279 / VKM B-1422 / R1</strain>
    </source>
</reference>
<accession>Q9RRX8</accession>
<feature type="chain" id="PRO_0000126698" description="Phenylalanine--tRNA ligase alpha subunit">
    <location>
        <begin position="1"/>
        <end position="339"/>
    </location>
</feature>
<feature type="binding site" evidence="1">
    <location>
        <position position="247"/>
    </location>
    <ligand>
        <name>Mg(2+)</name>
        <dbReference type="ChEBI" id="CHEBI:18420"/>
        <note>shared with beta subunit</note>
    </ligand>
</feature>
<proteinExistence type="inferred from homology"/>
<gene>
    <name type="primary">pheS</name>
    <name type="ordered locus">DR_2354</name>
</gene>